<gene>
    <name evidence="1" type="primary">proA</name>
    <name type="ordered locus">NMA1267</name>
</gene>
<name>PROA_NEIMA</name>
<organism>
    <name type="scientific">Neisseria meningitidis serogroup A / serotype 4A (strain DSM 15465 / Z2491)</name>
    <dbReference type="NCBI Taxonomy" id="122587"/>
    <lineage>
        <taxon>Bacteria</taxon>
        <taxon>Pseudomonadati</taxon>
        <taxon>Pseudomonadota</taxon>
        <taxon>Betaproteobacteria</taxon>
        <taxon>Neisseriales</taxon>
        <taxon>Neisseriaceae</taxon>
        <taxon>Neisseria</taxon>
    </lineage>
</organism>
<keyword id="KW-0028">Amino-acid biosynthesis</keyword>
<keyword id="KW-0963">Cytoplasm</keyword>
<keyword id="KW-0521">NADP</keyword>
<keyword id="KW-0560">Oxidoreductase</keyword>
<keyword id="KW-0641">Proline biosynthesis</keyword>
<proteinExistence type="inferred from homology"/>
<sequence>MSNTQKQLALAKAAKKSVNTADTEEKNRALFAMADSLEAAAADILAANRQDLEAAAGNIPESMTDRLLLDGKRICAMADGIRAVAALPDPVGEILETSTLPNGLEIVKKRVAMGVIGIIYESRPNVTSDAAALALKSGSAVVLRSGKDAFQSARAIVAALKTGLAQTRIDPDALQLIEDTGRESSYEMMRAKDYLDLLIPRGGAGLIRAVVENAVVPVIETGTGIVHIYIDKDADWDKALRIVYNAKTSRPSVCNSMEVLLVHEDIAADFLPKLERLLVRNRIEAGLPPVRFRLDPQAARHIGGEAAGADDFDTEFLDYILAVKTVASVEEAVGHIEAHGTHHSDGIVTENRHAADYFTTHIDSAAVYVNASTRFTDGGEFGLGCEMGISTQKLHARGPMGLKELTSYKYIVQGTGQVRE</sequence>
<reference key="1">
    <citation type="journal article" date="2000" name="Nature">
        <title>Complete DNA sequence of a serogroup A strain of Neisseria meningitidis Z2491.</title>
        <authorList>
            <person name="Parkhill J."/>
            <person name="Achtman M."/>
            <person name="James K.D."/>
            <person name="Bentley S.D."/>
            <person name="Churcher C.M."/>
            <person name="Klee S.R."/>
            <person name="Morelli G."/>
            <person name="Basham D."/>
            <person name="Brown D."/>
            <person name="Chillingworth T."/>
            <person name="Davies R.M."/>
            <person name="Davis P."/>
            <person name="Devlin K."/>
            <person name="Feltwell T."/>
            <person name="Hamlin N."/>
            <person name="Holroyd S."/>
            <person name="Jagels K."/>
            <person name="Leather S."/>
            <person name="Moule S."/>
            <person name="Mungall K.L."/>
            <person name="Quail M.A."/>
            <person name="Rajandream M.A."/>
            <person name="Rutherford K.M."/>
            <person name="Simmonds M."/>
            <person name="Skelton J."/>
            <person name="Whitehead S."/>
            <person name="Spratt B.G."/>
            <person name="Barrell B.G."/>
        </authorList>
    </citation>
    <scope>NUCLEOTIDE SEQUENCE [LARGE SCALE GENOMIC DNA]</scope>
    <source>
        <strain>DSM 15465 / Z2491</strain>
    </source>
</reference>
<accession>Q9JUK8</accession>
<accession>A1IRR1</accession>
<comment type="function">
    <text evidence="1">Catalyzes the NADPH-dependent reduction of L-glutamate 5-phosphate into L-glutamate 5-semialdehyde and phosphate. The product spontaneously undergoes cyclization to form 1-pyrroline-5-carboxylate.</text>
</comment>
<comment type="catalytic activity">
    <reaction evidence="1">
        <text>L-glutamate 5-semialdehyde + phosphate + NADP(+) = L-glutamyl 5-phosphate + NADPH + H(+)</text>
        <dbReference type="Rhea" id="RHEA:19541"/>
        <dbReference type="ChEBI" id="CHEBI:15378"/>
        <dbReference type="ChEBI" id="CHEBI:43474"/>
        <dbReference type="ChEBI" id="CHEBI:57783"/>
        <dbReference type="ChEBI" id="CHEBI:58066"/>
        <dbReference type="ChEBI" id="CHEBI:58274"/>
        <dbReference type="ChEBI" id="CHEBI:58349"/>
        <dbReference type="EC" id="1.2.1.41"/>
    </reaction>
</comment>
<comment type="pathway">
    <text evidence="1">Amino-acid biosynthesis; L-proline biosynthesis; L-glutamate 5-semialdehyde from L-glutamate: step 2/2.</text>
</comment>
<comment type="subcellular location">
    <subcellularLocation>
        <location evidence="1">Cytoplasm</location>
    </subcellularLocation>
</comment>
<comment type="similarity">
    <text evidence="1">Belongs to the gamma-glutamyl phosphate reductase family.</text>
</comment>
<protein>
    <recommendedName>
        <fullName evidence="1">Gamma-glutamyl phosphate reductase</fullName>
        <shortName evidence="1">GPR</shortName>
        <ecNumber evidence="1">1.2.1.41</ecNumber>
    </recommendedName>
    <alternativeName>
        <fullName evidence="1">Glutamate-5-semialdehyde dehydrogenase</fullName>
    </alternativeName>
    <alternativeName>
        <fullName evidence="1">Glutamyl-gamma-semialdehyde dehydrogenase</fullName>
        <shortName evidence="1">GSA dehydrogenase</shortName>
    </alternativeName>
</protein>
<feature type="chain" id="PRO_0000189755" description="Gamma-glutamyl phosphate reductase">
    <location>
        <begin position="1"/>
        <end position="420"/>
    </location>
</feature>
<dbReference type="EC" id="1.2.1.41" evidence="1"/>
<dbReference type="EMBL" id="AL157959">
    <property type="protein sequence ID" value="CAM08455.1"/>
    <property type="molecule type" value="Genomic_DNA"/>
</dbReference>
<dbReference type="PIR" id="A81895">
    <property type="entry name" value="A81895"/>
</dbReference>
<dbReference type="RefSeq" id="WP_002246170.1">
    <property type="nucleotide sequence ID" value="NC_003116.1"/>
</dbReference>
<dbReference type="SMR" id="Q9JUK8"/>
<dbReference type="EnsemblBacteria" id="CAM08455">
    <property type="protein sequence ID" value="CAM08455"/>
    <property type="gene ID" value="NMA1267"/>
</dbReference>
<dbReference type="KEGG" id="nma:NMA1267"/>
<dbReference type="HOGENOM" id="CLU_030231_0_0_4"/>
<dbReference type="UniPathway" id="UPA00098">
    <property type="reaction ID" value="UER00360"/>
</dbReference>
<dbReference type="Proteomes" id="UP000000626">
    <property type="component" value="Chromosome"/>
</dbReference>
<dbReference type="GO" id="GO:0005737">
    <property type="term" value="C:cytoplasm"/>
    <property type="evidence" value="ECO:0007669"/>
    <property type="project" value="UniProtKB-SubCell"/>
</dbReference>
<dbReference type="GO" id="GO:0004350">
    <property type="term" value="F:glutamate-5-semialdehyde dehydrogenase activity"/>
    <property type="evidence" value="ECO:0007669"/>
    <property type="project" value="UniProtKB-UniRule"/>
</dbReference>
<dbReference type="GO" id="GO:0050661">
    <property type="term" value="F:NADP binding"/>
    <property type="evidence" value="ECO:0007669"/>
    <property type="project" value="InterPro"/>
</dbReference>
<dbReference type="GO" id="GO:0055129">
    <property type="term" value="P:L-proline biosynthetic process"/>
    <property type="evidence" value="ECO:0007669"/>
    <property type="project" value="UniProtKB-UniRule"/>
</dbReference>
<dbReference type="CDD" id="cd07079">
    <property type="entry name" value="ALDH_F18-19_ProA-GPR"/>
    <property type="match status" value="1"/>
</dbReference>
<dbReference type="FunFam" id="3.40.309.10:FF:000006">
    <property type="entry name" value="Gamma-glutamyl phosphate reductase"/>
    <property type="match status" value="1"/>
</dbReference>
<dbReference type="Gene3D" id="3.40.605.10">
    <property type="entry name" value="Aldehyde Dehydrogenase, Chain A, domain 1"/>
    <property type="match status" value="1"/>
</dbReference>
<dbReference type="Gene3D" id="3.40.309.10">
    <property type="entry name" value="Aldehyde Dehydrogenase, Chain A, domain 2"/>
    <property type="match status" value="1"/>
</dbReference>
<dbReference type="HAMAP" id="MF_00412">
    <property type="entry name" value="ProA"/>
    <property type="match status" value="1"/>
</dbReference>
<dbReference type="InterPro" id="IPR016161">
    <property type="entry name" value="Ald_DH/histidinol_DH"/>
</dbReference>
<dbReference type="InterPro" id="IPR016163">
    <property type="entry name" value="Ald_DH_C"/>
</dbReference>
<dbReference type="InterPro" id="IPR016162">
    <property type="entry name" value="Ald_DH_N"/>
</dbReference>
<dbReference type="InterPro" id="IPR015590">
    <property type="entry name" value="Aldehyde_DH_dom"/>
</dbReference>
<dbReference type="InterPro" id="IPR020593">
    <property type="entry name" value="G-glutamylP_reductase_CS"/>
</dbReference>
<dbReference type="InterPro" id="IPR012134">
    <property type="entry name" value="Glu-5-SA_DH"/>
</dbReference>
<dbReference type="InterPro" id="IPR000965">
    <property type="entry name" value="GPR_dom"/>
</dbReference>
<dbReference type="NCBIfam" id="NF001221">
    <property type="entry name" value="PRK00197.1"/>
    <property type="match status" value="1"/>
</dbReference>
<dbReference type="NCBIfam" id="TIGR00407">
    <property type="entry name" value="proA"/>
    <property type="match status" value="1"/>
</dbReference>
<dbReference type="PANTHER" id="PTHR11063:SF8">
    <property type="entry name" value="DELTA-1-PYRROLINE-5-CARBOXYLATE SYNTHASE"/>
    <property type="match status" value="1"/>
</dbReference>
<dbReference type="PANTHER" id="PTHR11063">
    <property type="entry name" value="GLUTAMATE SEMIALDEHYDE DEHYDROGENASE"/>
    <property type="match status" value="1"/>
</dbReference>
<dbReference type="Pfam" id="PF00171">
    <property type="entry name" value="Aldedh"/>
    <property type="match status" value="1"/>
</dbReference>
<dbReference type="PIRSF" id="PIRSF000151">
    <property type="entry name" value="GPR"/>
    <property type="match status" value="1"/>
</dbReference>
<dbReference type="SUPFAM" id="SSF53720">
    <property type="entry name" value="ALDH-like"/>
    <property type="match status" value="1"/>
</dbReference>
<dbReference type="PROSITE" id="PS01223">
    <property type="entry name" value="PROA"/>
    <property type="match status" value="1"/>
</dbReference>
<evidence type="ECO:0000255" key="1">
    <source>
        <dbReference type="HAMAP-Rule" id="MF_00412"/>
    </source>
</evidence>